<accession>A0A2R2JFW7</accession>
<organism>
    <name type="scientific">Glaciozyma antarctica (strain PI12)</name>
    <name type="common">Antarctic psychrophilic yeast</name>
    <name type="synonym">Leucosporidium antarcticum</name>
    <dbReference type="NCBI Taxonomy" id="1332765"/>
    <lineage>
        <taxon>Eukaryota</taxon>
        <taxon>Fungi</taxon>
        <taxon>Dikarya</taxon>
        <taxon>Basidiomycota</taxon>
        <taxon>Pucciniomycotina</taxon>
        <taxon>Microbotryomycetes</taxon>
        <taxon>Kriegeriales</taxon>
        <taxon>Camptobasidiaceae</taxon>
        <taxon>Glaciozyma</taxon>
    </lineage>
</organism>
<sequence length="345" mass="36927">MKETAAAKFERQHMDSPDLGTDDDDKMSPATSPFLATPRTAGIVGCPFSGGQPKAGVHSGPLQLIESGLLNDIENLGWTVDFAGADALAVSIVSDTPDPDIGRLKQPRLVSRVTKDVADRVYAHASKGQLTVTLGGDHSLAMGTVSGTFKAYPEACLIWVDAHADINTPHTTESGRLHGCPVSFLLGLDGTSSEEIPEFSWIKPCLKPERIVYIGLRDIDAGERKILKDNNIKCFSMFHVDKYGIGKVVEMALDHVNPDRTRPIHLSFDVDALDPSVAPSTGTAVRGGLTFREGHYICEAIAETNLLVSLDIMEINPSLGALASVAQTVDVGRSLVRCALGETLL</sequence>
<name>ARGI_GLAA1</name>
<reference key="1">
    <citation type="journal article" date="2024" name="Extremophiles">
        <title>Biochemical and in silico structural characterization of a cold-active arginase from the psychrophilic yeast, Glaciozyma antarctica PI12.</title>
        <authorList>
            <person name="Yusof N.Y."/>
            <person name="Quay D.H.X."/>
            <person name="Kamaruddin S."/>
            <person name="Jonet M.A."/>
            <person name="Md Illias R."/>
            <person name="Mahadi N.M."/>
            <person name="Firdaus-Raih M."/>
            <person name="Abu Bakar F.D."/>
            <person name="Abdul Murad A.M."/>
        </authorList>
    </citation>
    <scope>FUNCTION</scope>
    <scope>CATALYTIC ACTIVITY</scope>
    <scope>SUBSTRATE SPECIFICITY</scope>
    <scope>BIOPHYSICOCHEMICAL PROPERTIES</scope>
    <scope>ACTIVITY REGULATION</scope>
</reference>
<reference evidence="6 8" key="2">
    <citation type="submission" date="2017-10" db="PDB data bank">
        <title>Crystal structure of a cold-adapted arginase from psychrophilic yeast, Glaciozyma antarctica.</title>
        <authorList>
            <person name="Murad A.M.A."/>
            <person name="Abu-Bakar F.D."/>
            <person name="Illias R.M."/>
            <person name="Mahadi N.M."/>
            <person name="Firdaus-Raih M."/>
            <person name="Quay D.H.X."/>
            <person name="Yusof N.Y."/>
        </authorList>
    </citation>
    <scope>X-RAY CRYSTALLOGRAPHY (2.35 ANGSTROMS)</scope>
</reference>
<reference evidence="7" key="3">
    <citation type="journal article" date="2018" name="Traffic">
        <title>Variations in nuclear localization strategies among pol X family enzymes.</title>
        <authorList>
            <person name="Kirby T.W."/>
            <person name="Pedersen L.C."/>
            <person name="Gabel S.A."/>
            <person name="Gassman N.R."/>
            <person name="London R.E."/>
        </authorList>
    </citation>
    <scope>X-RAY CRYSTALLOGRAPHY (2.18 ANGSTROMS) OF 1-26</scope>
</reference>
<evidence type="ECO:0000250" key="1">
    <source>
        <dbReference type="UniProtKB" id="P05089"/>
    </source>
</evidence>
<evidence type="ECO:0000255" key="2">
    <source>
        <dbReference type="PROSITE-ProRule" id="PRU00742"/>
    </source>
</evidence>
<evidence type="ECO:0000256" key="3">
    <source>
        <dbReference type="SAM" id="MobiDB-lite"/>
    </source>
</evidence>
<evidence type="ECO:0000269" key="4">
    <source>
    </source>
</evidence>
<evidence type="ECO:0000303" key="5">
    <source>
    </source>
</evidence>
<evidence type="ECO:0000312" key="6">
    <source>
        <dbReference type="PDB" id="5YNL"/>
    </source>
</evidence>
<evidence type="ECO:0007744" key="7">
    <source>
        <dbReference type="PDB" id="5W4E"/>
    </source>
</evidence>
<evidence type="ECO:0007744" key="8">
    <source>
        <dbReference type="PDB" id="5YNL"/>
    </source>
</evidence>
<evidence type="ECO:0007829" key="9">
    <source>
        <dbReference type="PDB" id="5YNL"/>
    </source>
</evidence>
<keyword id="KW-0002">3D-structure</keyword>
<keyword id="KW-0056">Arginine metabolism</keyword>
<keyword id="KW-0378">Hydrolase</keyword>
<keyword id="KW-0464">Manganese</keyword>
<keyword id="KW-0479">Metal-binding</keyword>
<protein>
    <recommendedName>
        <fullName evidence="5">Arginase</fullName>
        <ecNumber evidence="4">3.5.3.1</ecNumber>
    </recommendedName>
</protein>
<feature type="chain" id="PRO_0000460325" description="Arginase">
    <location>
        <begin position="1"/>
        <end position="345"/>
    </location>
</feature>
<feature type="region of interest" description="Disordered" evidence="3">
    <location>
        <begin position="1"/>
        <end position="34"/>
    </location>
</feature>
<feature type="compositionally biased region" description="Basic and acidic residues" evidence="3">
    <location>
        <begin position="1"/>
        <end position="16"/>
    </location>
</feature>
<feature type="binding site" evidence="2">
    <location>
        <position position="101"/>
    </location>
    <ligand>
        <name>Mn(2+)</name>
        <dbReference type="ChEBI" id="CHEBI:29035"/>
        <label>1</label>
    </ligand>
</feature>
<feature type="binding site" evidence="2">
    <location>
        <position position="124"/>
    </location>
    <ligand>
        <name>Mn(2+)</name>
        <dbReference type="ChEBI" id="CHEBI:29035"/>
        <label>1</label>
    </ligand>
</feature>
<feature type="binding site" evidence="2">
    <location>
        <position position="124"/>
    </location>
    <ligand>
        <name>Mn(2+)</name>
        <dbReference type="ChEBI" id="CHEBI:29035"/>
        <label>2</label>
    </ligand>
</feature>
<feature type="binding site" evidence="2">
    <location>
        <position position="126"/>
    </location>
    <ligand>
        <name>Mn(2+)</name>
        <dbReference type="ChEBI" id="CHEBI:29035"/>
        <label>2</label>
    </ligand>
</feature>
<feature type="binding site" evidence="2">
    <location>
        <position position="128"/>
    </location>
    <ligand>
        <name>Mn(2+)</name>
        <dbReference type="ChEBI" id="CHEBI:29035"/>
        <label>1</label>
    </ligand>
</feature>
<feature type="binding site" evidence="2">
    <location>
        <position position="232"/>
    </location>
    <ligand>
        <name>Mn(2+)</name>
        <dbReference type="ChEBI" id="CHEBI:29035"/>
        <label>1</label>
    </ligand>
</feature>
<feature type="binding site" evidence="2">
    <location>
        <position position="232"/>
    </location>
    <ligand>
        <name>Mn(2+)</name>
        <dbReference type="ChEBI" id="CHEBI:29035"/>
        <label>2</label>
    </ligand>
</feature>
<feature type="binding site" evidence="2">
    <location>
        <position position="234"/>
    </location>
    <ligand>
        <name>Mn(2+)</name>
        <dbReference type="ChEBI" id="CHEBI:29035"/>
        <label>2</label>
    </ligand>
</feature>
<feature type="strand" evidence="9">
    <location>
        <begin position="33"/>
        <end position="35"/>
    </location>
</feature>
<feature type="strand" evidence="9">
    <location>
        <begin position="40"/>
        <end position="46"/>
    </location>
</feature>
<feature type="helix" evidence="9">
    <location>
        <begin position="60"/>
        <end position="66"/>
    </location>
</feature>
<feature type="helix" evidence="9">
    <location>
        <begin position="69"/>
        <end position="75"/>
    </location>
</feature>
<feature type="strand" evidence="9">
    <location>
        <begin position="79"/>
        <end position="82"/>
    </location>
</feature>
<feature type="helix" evidence="9">
    <location>
        <begin position="107"/>
        <end position="125"/>
    </location>
</feature>
<feature type="turn" evidence="9">
    <location>
        <begin position="126"/>
        <end position="128"/>
    </location>
</feature>
<feature type="strand" evidence="9">
    <location>
        <begin position="130"/>
        <end position="136"/>
    </location>
</feature>
<feature type="helix" evidence="9">
    <location>
        <begin position="138"/>
        <end position="140"/>
    </location>
</feature>
<feature type="helix" evidence="9">
    <location>
        <begin position="141"/>
        <end position="151"/>
    </location>
</feature>
<feature type="strand" evidence="9">
    <location>
        <begin position="156"/>
        <end position="160"/>
    </location>
</feature>
<feature type="turn" evidence="9">
    <location>
        <begin position="169"/>
        <end position="171"/>
    </location>
</feature>
<feature type="helix" evidence="9">
    <location>
        <begin position="177"/>
        <end position="179"/>
    </location>
</feature>
<feature type="helix" evidence="9">
    <location>
        <begin position="181"/>
        <end position="185"/>
    </location>
</feature>
<feature type="strand" evidence="9">
    <location>
        <begin position="210"/>
        <end position="216"/>
    </location>
</feature>
<feature type="helix" evidence="9">
    <location>
        <begin position="224"/>
        <end position="229"/>
    </location>
</feature>
<feature type="strand" evidence="9">
    <location>
        <begin position="233"/>
        <end position="236"/>
    </location>
</feature>
<feature type="helix" evidence="9">
    <location>
        <begin position="237"/>
        <end position="256"/>
    </location>
</feature>
<feature type="strand" evidence="9">
    <location>
        <begin position="264"/>
        <end position="269"/>
    </location>
</feature>
<feature type="helix" evidence="9">
    <location>
        <begin position="270"/>
        <end position="272"/>
    </location>
</feature>
<feature type="helix" evidence="9">
    <location>
        <begin position="291"/>
        <end position="303"/>
    </location>
</feature>
<feature type="strand" evidence="9">
    <location>
        <begin position="307"/>
        <end position="313"/>
    </location>
</feature>
<feature type="helix" evidence="9">
    <location>
        <begin position="328"/>
        <end position="339"/>
    </location>
</feature>
<proteinExistence type="evidence at protein level"/>
<dbReference type="EC" id="3.5.3.1" evidence="4"/>
<dbReference type="PDB" id="5W4E">
    <property type="method" value="X-ray"/>
    <property type="resolution" value="2.18 A"/>
    <property type="chains" value="B=1-26"/>
</dbReference>
<dbReference type="PDB" id="5YNL">
    <property type="method" value="X-ray"/>
    <property type="resolution" value="2.35 A"/>
    <property type="chains" value="A=1-345"/>
</dbReference>
<dbReference type="PDBsum" id="5W4E"/>
<dbReference type="PDBsum" id="5YNL"/>
<dbReference type="SMR" id="A0A2R2JFW7"/>
<dbReference type="UniPathway" id="UPA00158">
    <property type="reaction ID" value="UER00270"/>
</dbReference>
<dbReference type="GO" id="GO:0005829">
    <property type="term" value="C:cytosol"/>
    <property type="evidence" value="ECO:0007669"/>
    <property type="project" value="TreeGrafter"/>
</dbReference>
<dbReference type="GO" id="GO:0005634">
    <property type="term" value="C:nucleus"/>
    <property type="evidence" value="ECO:0007669"/>
    <property type="project" value="TreeGrafter"/>
</dbReference>
<dbReference type="GO" id="GO:0004053">
    <property type="term" value="F:arginase activity"/>
    <property type="evidence" value="ECO:0007669"/>
    <property type="project" value="UniProtKB-EC"/>
</dbReference>
<dbReference type="GO" id="GO:0030145">
    <property type="term" value="F:manganese ion binding"/>
    <property type="evidence" value="ECO:0007669"/>
    <property type="project" value="TreeGrafter"/>
</dbReference>
<dbReference type="GO" id="GO:0019547">
    <property type="term" value="P:arginine catabolic process to ornithine"/>
    <property type="evidence" value="ECO:0007669"/>
    <property type="project" value="TreeGrafter"/>
</dbReference>
<dbReference type="GO" id="GO:0000050">
    <property type="term" value="P:urea cycle"/>
    <property type="evidence" value="ECO:0007669"/>
    <property type="project" value="UniProtKB-UniPathway"/>
</dbReference>
<dbReference type="CDD" id="cd09989">
    <property type="entry name" value="Arginase"/>
    <property type="match status" value="1"/>
</dbReference>
<dbReference type="FunFam" id="3.40.800.10:FF:000009">
    <property type="entry name" value="Arginase"/>
    <property type="match status" value="1"/>
</dbReference>
<dbReference type="Gene3D" id="3.40.800.10">
    <property type="entry name" value="Ureohydrolase domain"/>
    <property type="match status" value="1"/>
</dbReference>
<dbReference type="Gene3D" id="1.10.10.10">
    <property type="entry name" value="Winged helix-like DNA-binding domain superfamily/Winged helix DNA-binding domain"/>
    <property type="match status" value="1"/>
</dbReference>
<dbReference type="InterPro" id="IPR014033">
    <property type="entry name" value="Arginase"/>
</dbReference>
<dbReference type="InterPro" id="IPR006035">
    <property type="entry name" value="Ureohydrolase"/>
</dbReference>
<dbReference type="InterPro" id="IPR023696">
    <property type="entry name" value="Ureohydrolase_dom_sf"/>
</dbReference>
<dbReference type="InterPro" id="IPR020855">
    <property type="entry name" value="Ureohydrolase_Mn_BS"/>
</dbReference>
<dbReference type="InterPro" id="IPR036388">
    <property type="entry name" value="WH-like_DNA-bd_sf"/>
</dbReference>
<dbReference type="NCBIfam" id="TIGR01229">
    <property type="entry name" value="rocF_arginase"/>
    <property type="match status" value="1"/>
</dbReference>
<dbReference type="PANTHER" id="PTHR43782">
    <property type="entry name" value="ARGINASE"/>
    <property type="match status" value="1"/>
</dbReference>
<dbReference type="PANTHER" id="PTHR43782:SF3">
    <property type="entry name" value="ARGINASE"/>
    <property type="match status" value="1"/>
</dbReference>
<dbReference type="Pfam" id="PF00491">
    <property type="entry name" value="Arginase"/>
    <property type="match status" value="1"/>
</dbReference>
<dbReference type="PRINTS" id="PR00116">
    <property type="entry name" value="ARGINASE"/>
</dbReference>
<dbReference type="SUPFAM" id="SSF52768">
    <property type="entry name" value="Arginase/deacetylase"/>
    <property type="match status" value="1"/>
</dbReference>
<dbReference type="PROSITE" id="PS01053">
    <property type="entry name" value="ARGINASE_1"/>
    <property type="match status" value="1"/>
</dbReference>
<dbReference type="PROSITE" id="PS51409">
    <property type="entry name" value="ARGINASE_2"/>
    <property type="match status" value="1"/>
</dbReference>
<comment type="function">
    <text evidence="4">Cold-active L-arginase that catalyzes the hydrolysis of L-arginine to L-ornithine and urea, an essential reaction in the urea cycle for toxic ammonia removal and cell proliferation (PubMed:38300354). Is not able to use D-arginine or L-canavanine as substrates (PubMed:38300354).</text>
</comment>
<comment type="catalytic activity">
    <reaction evidence="4">
        <text>L-arginine + H2O = urea + L-ornithine</text>
        <dbReference type="Rhea" id="RHEA:20569"/>
        <dbReference type="ChEBI" id="CHEBI:15377"/>
        <dbReference type="ChEBI" id="CHEBI:16199"/>
        <dbReference type="ChEBI" id="CHEBI:32682"/>
        <dbReference type="ChEBI" id="CHEBI:46911"/>
        <dbReference type="EC" id="3.5.3.1"/>
    </reaction>
    <physiologicalReaction direction="left-to-right" evidence="4">
        <dbReference type="Rhea" id="RHEA:20570"/>
    </physiologicalReaction>
</comment>
<comment type="cofactor">
    <cofactor evidence="2">
        <name>Mn(2+)</name>
        <dbReference type="ChEBI" id="CHEBI:29035"/>
    </cofactor>
    <text evidence="2">Binds 2 manganese ions per subunit.</text>
</comment>
<comment type="activity regulation">
    <text evidence="4">The enzyme activity is increased in the range of 20-50% upon the addition of Mn(2+) (1 mM), Co(2+) (1 mM), Ni(2+) (1 and 5 mM) and K(+) (5 mM) (PubMed:38300354). In contrast, the addition of Cu(2+), Zn(2+), Ca(2+), Mg(2+), Fe(2+) (both 1 and 5 mM), and Co(2+) (5 mM) strongly suppresses the arginase activity (PubMed:38300354). SDS (1%) and EDTA (1 mM) are the most potent inhibitors (PubMed:38300354). Reducing agents DTT (1 mM), PMSF (1 mM) and beta-mercaptoethanol (1 mM) also significantly inhibit activity by 85%, 64% and 35%, respectively (PubMed:38300354). Surfactants Triton X-100 (1%), Tween-80 (1%) and Tween-20 (1%) are more tolerant, showing a slight decrease of arginase activity in the range of 10-30% (PubMed:38300354).</text>
</comment>
<comment type="biophysicochemical properties">
    <kinetics>
        <KM evidence="4">9 mM for L-arginine</KM>
        <Vmax evidence="4">3984.0 mmol/min/mg enzyme toward L-arginine</Vmax>
    </kinetics>
    <phDependence>
        <text evidence="4">Optimum pH is 9.0.</text>
    </phDependence>
    <temperatureDependence>
        <text evidence="4">Optimum temperature is 20 degrees Celsius.</text>
    </temperatureDependence>
</comment>
<comment type="pathway">
    <text evidence="4">Nitrogen metabolism; urea cycle; L-ornithine and urea from L-arginine: step 1/1.</text>
</comment>
<comment type="subunit">
    <text evidence="1">Homotrimer.</text>
</comment>
<comment type="miscellaneous">
    <text evidence="5">Glaciozyma antarctica arginase possesses predominantly smaller and uncharged amino acids, fewer salt bridges, hydrogen bonds and hydrophobic interactions compared to the other counterparts. These unique structural characteristics facilitate catalytic functions at low-temperature environments.</text>
</comment>
<comment type="similarity">
    <text evidence="2">Belongs to the arginase family.</text>
</comment>